<name>FBD12_ARATH</name>
<gene>
    <name type="ordered locus">At3g60710</name>
    <name type="ORF">T4C21.120</name>
</gene>
<accession>Q9LZZ2</accession>
<protein>
    <recommendedName>
        <fullName>Putative FBD-associated F-box protein At3g60710</fullName>
    </recommendedName>
</protein>
<reference key="1">
    <citation type="journal article" date="2000" name="Nature">
        <title>Sequence and analysis of chromosome 3 of the plant Arabidopsis thaliana.</title>
        <authorList>
            <person name="Salanoubat M."/>
            <person name="Lemcke K."/>
            <person name="Rieger M."/>
            <person name="Ansorge W."/>
            <person name="Unseld M."/>
            <person name="Fartmann B."/>
            <person name="Valle G."/>
            <person name="Bloecker H."/>
            <person name="Perez-Alonso M."/>
            <person name="Obermaier B."/>
            <person name="Delseny M."/>
            <person name="Boutry M."/>
            <person name="Grivell L.A."/>
            <person name="Mache R."/>
            <person name="Puigdomenech P."/>
            <person name="De Simone V."/>
            <person name="Choisne N."/>
            <person name="Artiguenave F."/>
            <person name="Robert C."/>
            <person name="Brottier P."/>
            <person name="Wincker P."/>
            <person name="Cattolico L."/>
            <person name="Weissenbach J."/>
            <person name="Saurin W."/>
            <person name="Quetier F."/>
            <person name="Schaefer M."/>
            <person name="Mueller-Auer S."/>
            <person name="Gabel C."/>
            <person name="Fuchs M."/>
            <person name="Benes V."/>
            <person name="Wurmbach E."/>
            <person name="Drzonek H."/>
            <person name="Erfle H."/>
            <person name="Jordan N."/>
            <person name="Bangert S."/>
            <person name="Wiedelmann R."/>
            <person name="Kranz H."/>
            <person name="Voss H."/>
            <person name="Holland R."/>
            <person name="Brandt P."/>
            <person name="Nyakatura G."/>
            <person name="Vezzi A."/>
            <person name="D'Angelo M."/>
            <person name="Pallavicini A."/>
            <person name="Toppo S."/>
            <person name="Simionati B."/>
            <person name="Conrad A."/>
            <person name="Hornischer K."/>
            <person name="Kauer G."/>
            <person name="Loehnert T.-H."/>
            <person name="Nordsiek G."/>
            <person name="Reichelt J."/>
            <person name="Scharfe M."/>
            <person name="Schoen O."/>
            <person name="Bargues M."/>
            <person name="Terol J."/>
            <person name="Climent J."/>
            <person name="Navarro P."/>
            <person name="Collado C."/>
            <person name="Perez-Perez A."/>
            <person name="Ottenwaelder B."/>
            <person name="Duchemin D."/>
            <person name="Cooke R."/>
            <person name="Laudie M."/>
            <person name="Berger-Llauro C."/>
            <person name="Purnelle B."/>
            <person name="Masuy D."/>
            <person name="de Haan M."/>
            <person name="Maarse A.C."/>
            <person name="Alcaraz J.-P."/>
            <person name="Cottet A."/>
            <person name="Casacuberta E."/>
            <person name="Monfort A."/>
            <person name="Argiriou A."/>
            <person name="Flores M."/>
            <person name="Liguori R."/>
            <person name="Vitale D."/>
            <person name="Mannhaupt G."/>
            <person name="Haase D."/>
            <person name="Schoof H."/>
            <person name="Rudd S."/>
            <person name="Zaccaria P."/>
            <person name="Mewes H.-W."/>
            <person name="Mayer K.F.X."/>
            <person name="Kaul S."/>
            <person name="Town C.D."/>
            <person name="Koo H.L."/>
            <person name="Tallon L.J."/>
            <person name="Jenkins J."/>
            <person name="Rooney T."/>
            <person name="Rizzo M."/>
            <person name="Walts A."/>
            <person name="Utterback T."/>
            <person name="Fujii C.Y."/>
            <person name="Shea T.P."/>
            <person name="Creasy T.H."/>
            <person name="Haas B."/>
            <person name="Maiti R."/>
            <person name="Wu D."/>
            <person name="Peterson J."/>
            <person name="Van Aken S."/>
            <person name="Pai G."/>
            <person name="Militscher J."/>
            <person name="Sellers P."/>
            <person name="Gill J.E."/>
            <person name="Feldblyum T.V."/>
            <person name="Preuss D."/>
            <person name="Lin X."/>
            <person name="Nierman W.C."/>
            <person name="Salzberg S.L."/>
            <person name="White O."/>
            <person name="Venter J.C."/>
            <person name="Fraser C.M."/>
            <person name="Kaneko T."/>
            <person name="Nakamura Y."/>
            <person name="Sato S."/>
            <person name="Kato T."/>
            <person name="Asamizu E."/>
            <person name="Sasamoto S."/>
            <person name="Kimura T."/>
            <person name="Idesawa K."/>
            <person name="Kawashima K."/>
            <person name="Kishida Y."/>
            <person name="Kiyokawa C."/>
            <person name="Kohara M."/>
            <person name="Matsumoto M."/>
            <person name="Matsuno A."/>
            <person name="Muraki A."/>
            <person name="Nakayama S."/>
            <person name="Nakazaki N."/>
            <person name="Shinpo S."/>
            <person name="Takeuchi C."/>
            <person name="Wada T."/>
            <person name="Watanabe A."/>
            <person name="Yamada M."/>
            <person name="Yasuda M."/>
            <person name="Tabata S."/>
        </authorList>
    </citation>
    <scope>NUCLEOTIDE SEQUENCE [LARGE SCALE GENOMIC DNA]</scope>
    <source>
        <strain>cv. Columbia</strain>
    </source>
</reference>
<reference key="2">
    <citation type="journal article" date="2017" name="Plant J.">
        <title>Araport11: a complete reannotation of the Arabidopsis thaliana reference genome.</title>
        <authorList>
            <person name="Cheng C.Y."/>
            <person name="Krishnakumar V."/>
            <person name="Chan A.P."/>
            <person name="Thibaud-Nissen F."/>
            <person name="Schobel S."/>
            <person name="Town C.D."/>
        </authorList>
    </citation>
    <scope>GENOME REANNOTATION</scope>
    <source>
        <strain>cv. Columbia</strain>
    </source>
</reference>
<evidence type="ECO:0000255" key="1">
    <source>
        <dbReference type="PROSITE-ProRule" id="PRU00080"/>
    </source>
</evidence>
<sequence length="320" mass="36725">MEDLISQLPNELLQEILLNLPTSESVRTSVLPTRWRNLWQSVPGLYLISRQILKFVNLRTPSDVVLEMLISCSPVLQVLSICDVGVDFLKVRSQTLRSLSLWTFIFKGENDDVSLGDDGESGLVIDTPSLEFLRIRDFPLEDFRVESVISSIKMCIDGTYAYTKLQQLPEFKNLTRLYAFLHTDYSEMLPIYLSSSPNLKSIDLELHGYPKMEEIASSPVPKCLQTSIENVKIKMTPKADQEKSRKAETEVANYILENATLLKLTLWLDDEEEDESSSVLEKILTFQNYSFVEVKIGREASKFRLGYTFDEAKHFSRRFL</sequence>
<feature type="chain" id="PRO_0000283145" description="Putative FBD-associated F-box protein At3g60710">
    <location>
        <begin position="1"/>
        <end position="320"/>
    </location>
</feature>
<feature type="domain" description="F-box" evidence="1">
    <location>
        <begin position="2"/>
        <end position="48"/>
    </location>
</feature>
<feature type="domain" description="FBD">
    <location>
        <begin position="212"/>
        <end position="268"/>
    </location>
</feature>
<proteinExistence type="predicted"/>
<organism>
    <name type="scientific">Arabidopsis thaliana</name>
    <name type="common">Mouse-ear cress</name>
    <dbReference type="NCBI Taxonomy" id="3702"/>
    <lineage>
        <taxon>Eukaryota</taxon>
        <taxon>Viridiplantae</taxon>
        <taxon>Streptophyta</taxon>
        <taxon>Embryophyta</taxon>
        <taxon>Tracheophyta</taxon>
        <taxon>Spermatophyta</taxon>
        <taxon>Magnoliopsida</taxon>
        <taxon>eudicotyledons</taxon>
        <taxon>Gunneridae</taxon>
        <taxon>Pentapetalae</taxon>
        <taxon>rosids</taxon>
        <taxon>malvids</taxon>
        <taxon>Brassicales</taxon>
        <taxon>Brassicaceae</taxon>
        <taxon>Camelineae</taxon>
        <taxon>Arabidopsis</taxon>
    </lineage>
</organism>
<keyword id="KW-1185">Reference proteome</keyword>
<dbReference type="EMBL" id="AL162295">
    <property type="protein sequence ID" value="CAB82675.1"/>
    <property type="molecule type" value="Genomic_DNA"/>
</dbReference>
<dbReference type="EMBL" id="CP002686">
    <property type="protein sequence ID" value="AEE80099.1"/>
    <property type="molecule type" value="Genomic_DNA"/>
</dbReference>
<dbReference type="PIR" id="T47882">
    <property type="entry name" value="T47882"/>
</dbReference>
<dbReference type="RefSeq" id="NP_191630.1">
    <property type="nucleotide sequence ID" value="NM_115935.1"/>
</dbReference>
<dbReference type="BioGRID" id="10556">
    <property type="interactions" value="1"/>
</dbReference>
<dbReference type="PaxDb" id="3702-AT3G60710.1"/>
<dbReference type="EnsemblPlants" id="AT3G60710.1">
    <property type="protein sequence ID" value="AT3G60710.1"/>
    <property type="gene ID" value="AT3G60710"/>
</dbReference>
<dbReference type="GeneID" id="825242"/>
<dbReference type="Gramene" id="AT3G60710.1">
    <property type="protein sequence ID" value="AT3G60710.1"/>
    <property type="gene ID" value="AT3G60710"/>
</dbReference>
<dbReference type="KEGG" id="ath:AT3G60710"/>
<dbReference type="Araport" id="AT3G60710"/>
<dbReference type="TAIR" id="AT3G60710"/>
<dbReference type="HOGENOM" id="CLU_1052054_0_0_1"/>
<dbReference type="InParanoid" id="Q9LZZ2"/>
<dbReference type="OMA" id="ELHGYPK"/>
<dbReference type="PhylomeDB" id="Q9LZZ2"/>
<dbReference type="PRO" id="PR:Q9LZZ2"/>
<dbReference type="Proteomes" id="UP000006548">
    <property type="component" value="Chromosome 3"/>
</dbReference>
<dbReference type="ExpressionAtlas" id="Q9LZZ2">
    <property type="expression patterns" value="baseline and differential"/>
</dbReference>
<dbReference type="CDD" id="cd22160">
    <property type="entry name" value="F-box_AtFBL13-like"/>
    <property type="match status" value="1"/>
</dbReference>
<dbReference type="InterPro" id="IPR036047">
    <property type="entry name" value="F-box-like_dom_sf"/>
</dbReference>
<dbReference type="InterPro" id="IPR053781">
    <property type="entry name" value="F-box_AtFBL13-like"/>
</dbReference>
<dbReference type="InterPro" id="IPR001810">
    <property type="entry name" value="F-box_dom"/>
</dbReference>
<dbReference type="InterPro" id="IPR006566">
    <property type="entry name" value="FBD"/>
</dbReference>
<dbReference type="InterPro" id="IPR050232">
    <property type="entry name" value="FBL13/AtMIF1-like"/>
</dbReference>
<dbReference type="PANTHER" id="PTHR31900">
    <property type="entry name" value="F-BOX/RNI SUPERFAMILY PROTEIN-RELATED"/>
    <property type="match status" value="1"/>
</dbReference>
<dbReference type="PANTHER" id="PTHR31900:SF25">
    <property type="entry name" value="FBD DOMAIN-CONTAINING PROTEIN"/>
    <property type="match status" value="1"/>
</dbReference>
<dbReference type="Pfam" id="PF00646">
    <property type="entry name" value="F-box"/>
    <property type="match status" value="1"/>
</dbReference>
<dbReference type="Pfam" id="PF08387">
    <property type="entry name" value="FBD"/>
    <property type="match status" value="1"/>
</dbReference>
<dbReference type="SMART" id="SM00579">
    <property type="entry name" value="FBD"/>
    <property type="match status" value="1"/>
</dbReference>
<dbReference type="SUPFAM" id="SSF81383">
    <property type="entry name" value="F-box domain"/>
    <property type="match status" value="1"/>
</dbReference>
<dbReference type="SUPFAM" id="SSF52047">
    <property type="entry name" value="RNI-like"/>
    <property type="match status" value="1"/>
</dbReference>
<dbReference type="PROSITE" id="PS50181">
    <property type="entry name" value="FBOX"/>
    <property type="match status" value="1"/>
</dbReference>